<gene>
    <name type="primary">MRPS7</name>
    <name type="ORF">RCJMB04_1c20</name>
</gene>
<proteinExistence type="evidence at transcript level"/>
<protein>
    <recommendedName>
        <fullName evidence="3">Small ribosomal subunit protein uS7m</fullName>
    </recommendedName>
    <alternativeName>
        <fullName>28S ribosomal protein S7, mitochondrial</fullName>
        <shortName>MRP-S7</shortName>
        <shortName>S7mt</shortName>
    </alternativeName>
</protein>
<comment type="subunit">
    <text evidence="1">Component of the mitochondrial ribosome small subunit (28S) which comprises a 12S rRNA and about 30 distinct proteins.</text>
</comment>
<comment type="subcellular location">
    <subcellularLocation>
        <location evidence="1">Mitochondrion</location>
    </subcellularLocation>
</comment>
<comment type="similarity">
    <text evidence="3">Belongs to the universal ribosomal protein uS7 family.</text>
</comment>
<comment type="sequence caution" evidence="3">
    <conflict type="erroneous termination">
        <sequence resource="EMBL-CDS" id="CAG30953"/>
    </conflict>
    <text>Truncated C-terminus.</text>
</comment>
<feature type="transit peptide" description="Mitochondrion" evidence="2">
    <location>
        <begin position="1"/>
        <end position="28"/>
    </location>
</feature>
<feature type="chain" id="PRO_0000273059" description="Small ribosomal subunit protein uS7m">
    <location>
        <begin position="29"/>
        <end position="233"/>
    </location>
</feature>
<dbReference type="EMBL" id="AJ719294">
    <property type="protein sequence ID" value="CAG30953.1"/>
    <property type="status" value="ALT_SEQ"/>
    <property type="molecule type" value="mRNA"/>
</dbReference>
<dbReference type="RefSeq" id="NP_001026280.2">
    <property type="nucleotide sequence ID" value="NM_001031109.4"/>
</dbReference>
<dbReference type="RefSeq" id="XP_015150891.1">
    <property type="nucleotide sequence ID" value="XM_015295405.1"/>
</dbReference>
<dbReference type="RefSeq" id="XP_015150892.1">
    <property type="nucleotide sequence ID" value="XM_015295406.1"/>
</dbReference>
<dbReference type="RefSeq" id="XP_046758009.1">
    <property type="nucleotide sequence ID" value="XM_046902053.1"/>
</dbReference>
<dbReference type="RefSeq" id="XP_046785438.1">
    <property type="nucleotide sequence ID" value="XM_046929482.1"/>
</dbReference>
<dbReference type="SMR" id="Q5ZMU0"/>
<dbReference type="FunCoup" id="Q5ZMU0">
    <property type="interactions" value="1142"/>
</dbReference>
<dbReference type="STRING" id="9031.ENSGALP00000061664"/>
<dbReference type="PaxDb" id="9031-ENSGALP00000012973"/>
<dbReference type="Ensembl" id="ENSGALT00010071838.1">
    <property type="protein sequence ID" value="ENSGALP00010044528.1"/>
    <property type="gene ID" value="ENSGALG00010029701.1"/>
</dbReference>
<dbReference type="GeneID" id="422122"/>
<dbReference type="KEGG" id="gga:422122"/>
<dbReference type="CTD" id="51081"/>
<dbReference type="VEuPathDB" id="HostDB:geneid_422122"/>
<dbReference type="eggNOG" id="KOG3291">
    <property type="taxonomic scope" value="Eukaryota"/>
</dbReference>
<dbReference type="GeneTree" id="ENSGT00390000014620"/>
<dbReference type="HOGENOM" id="CLU_072226_0_1_1"/>
<dbReference type="InParanoid" id="Q5ZMU0"/>
<dbReference type="OMA" id="HELHKQC"/>
<dbReference type="OrthoDB" id="9972728at2759"/>
<dbReference type="PhylomeDB" id="Q5ZMU0"/>
<dbReference type="TreeFam" id="TF105978"/>
<dbReference type="Reactome" id="R-GGA-5389840">
    <property type="pathway name" value="Mitochondrial translation elongation"/>
</dbReference>
<dbReference type="Reactome" id="R-GGA-5419276">
    <property type="pathway name" value="Mitochondrial translation termination"/>
</dbReference>
<dbReference type="PRO" id="PR:Q5ZMU0"/>
<dbReference type="Proteomes" id="UP000000539">
    <property type="component" value="Chromosome 18"/>
</dbReference>
<dbReference type="Bgee" id="ENSGALG00000007999">
    <property type="expression patterns" value="Expressed in heart and 12 other cell types or tissues"/>
</dbReference>
<dbReference type="GO" id="GO:0005763">
    <property type="term" value="C:mitochondrial small ribosomal subunit"/>
    <property type="evidence" value="ECO:0000250"/>
    <property type="project" value="UniProtKB"/>
</dbReference>
<dbReference type="GO" id="GO:0005840">
    <property type="term" value="C:ribosome"/>
    <property type="evidence" value="ECO:0000318"/>
    <property type="project" value="GO_Central"/>
</dbReference>
<dbReference type="GO" id="GO:0003729">
    <property type="term" value="F:mRNA binding"/>
    <property type="evidence" value="ECO:0000318"/>
    <property type="project" value="GO_Central"/>
</dbReference>
<dbReference type="GO" id="GO:0019843">
    <property type="term" value="F:rRNA binding"/>
    <property type="evidence" value="ECO:0000318"/>
    <property type="project" value="GO_Central"/>
</dbReference>
<dbReference type="GO" id="GO:0003735">
    <property type="term" value="F:structural constituent of ribosome"/>
    <property type="evidence" value="ECO:0000250"/>
    <property type="project" value="UniProtKB"/>
</dbReference>
<dbReference type="GO" id="GO:0032543">
    <property type="term" value="P:mitochondrial translation"/>
    <property type="evidence" value="ECO:0000250"/>
    <property type="project" value="UniProtKB"/>
</dbReference>
<dbReference type="GO" id="GO:0000028">
    <property type="term" value="P:ribosomal small subunit assembly"/>
    <property type="evidence" value="ECO:0000318"/>
    <property type="project" value="GO_Central"/>
</dbReference>
<dbReference type="GO" id="GO:0006412">
    <property type="term" value="P:translation"/>
    <property type="evidence" value="ECO:0000318"/>
    <property type="project" value="GO_Central"/>
</dbReference>
<dbReference type="CDD" id="cd14870">
    <property type="entry name" value="uS7_Mitochondria_Mammalian"/>
    <property type="match status" value="1"/>
</dbReference>
<dbReference type="FunFam" id="1.10.455.10:FF:000004">
    <property type="entry name" value="28S ribosomal protein S7, mitochondrial"/>
    <property type="match status" value="1"/>
</dbReference>
<dbReference type="Gene3D" id="1.10.455.10">
    <property type="entry name" value="Ribosomal protein S7 domain"/>
    <property type="match status" value="1"/>
</dbReference>
<dbReference type="InterPro" id="IPR000235">
    <property type="entry name" value="Ribosomal_uS7"/>
</dbReference>
<dbReference type="InterPro" id="IPR023798">
    <property type="entry name" value="Ribosomal_uS7_dom"/>
</dbReference>
<dbReference type="InterPro" id="IPR036823">
    <property type="entry name" value="Ribosomal_uS7_dom_sf"/>
</dbReference>
<dbReference type="PANTHER" id="PTHR11205">
    <property type="entry name" value="RIBOSOMAL PROTEIN S7"/>
    <property type="match status" value="1"/>
</dbReference>
<dbReference type="Pfam" id="PF00177">
    <property type="entry name" value="Ribosomal_S7"/>
    <property type="match status" value="1"/>
</dbReference>
<dbReference type="PIRSF" id="PIRSF002122">
    <property type="entry name" value="RPS7p_RPS7a_RPS5e_RPS7o"/>
    <property type="match status" value="1"/>
</dbReference>
<dbReference type="SUPFAM" id="SSF47973">
    <property type="entry name" value="Ribosomal protein S7"/>
    <property type="match status" value="1"/>
</dbReference>
<reference key="1">
    <citation type="journal article" date="2005" name="Genome Biol.">
        <title>Full-length cDNAs from chicken bursal lymphocytes to facilitate gene function analysis.</title>
        <authorList>
            <person name="Caldwell R.B."/>
            <person name="Kierzek A.M."/>
            <person name="Arakawa H."/>
            <person name="Bezzubov Y."/>
            <person name="Zaim J."/>
            <person name="Fiedler P."/>
            <person name="Kutter S."/>
            <person name="Blagodatski A."/>
            <person name="Kostovska D."/>
            <person name="Koter M."/>
            <person name="Plachy J."/>
            <person name="Carninci P."/>
            <person name="Hayashizaki Y."/>
            <person name="Buerstedde J.-M."/>
        </authorList>
    </citation>
    <scope>NUCLEOTIDE SEQUENCE [LARGE SCALE MRNA]</scope>
    <source>
        <strain>CB</strain>
        <tissue>Bursa of Fabricius</tissue>
    </source>
</reference>
<name>RT07_CHICK</name>
<sequence>MAAPTAAGLCPRLRAWLPRLTQVRWSRYNPSFLEPEVNKELYQKPFNELSEEEKEKQELKAVHPIKAAPPSISSSVFSDPMISKFTNMMMKDGNKVLARSLMAQTLENIKRKQLEKYHRAPDDEKERVECNPYVIFHQALKNCQPIIGLSNITRGGKTYQVPVPLKDNRKRFLAMKWLITECRENKHRRTLMPEKLSEELIQAFNNEGPIIKKKHVLHKMAEANRAYAHFRWW</sequence>
<keyword id="KW-0496">Mitochondrion</keyword>
<keyword id="KW-1185">Reference proteome</keyword>
<keyword id="KW-0687">Ribonucleoprotein</keyword>
<keyword id="KW-0689">Ribosomal protein</keyword>
<keyword id="KW-0809">Transit peptide</keyword>
<accession>Q5ZMU0</accession>
<organism>
    <name type="scientific">Gallus gallus</name>
    <name type="common">Chicken</name>
    <dbReference type="NCBI Taxonomy" id="9031"/>
    <lineage>
        <taxon>Eukaryota</taxon>
        <taxon>Metazoa</taxon>
        <taxon>Chordata</taxon>
        <taxon>Craniata</taxon>
        <taxon>Vertebrata</taxon>
        <taxon>Euteleostomi</taxon>
        <taxon>Archelosauria</taxon>
        <taxon>Archosauria</taxon>
        <taxon>Dinosauria</taxon>
        <taxon>Saurischia</taxon>
        <taxon>Theropoda</taxon>
        <taxon>Coelurosauria</taxon>
        <taxon>Aves</taxon>
        <taxon>Neognathae</taxon>
        <taxon>Galloanserae</taxon>
        <taxon>Galliformes</taxon>
        <taxon>Phasianidae</taxon>
        <taxon>Phasianinae</taxon>
        <taxon>Gallus</taxon>
    </lineage>
</organism>
<evidence type="ECO:0000250" key="1">
    <source>
        <dbReference type="UniProtKB" id="Q3T040"/>
    </source>
</evidence>
<evidence type="ECO:0000255" key="2"/>
<evidence type="ECO:0000305" key="3"/>